<proteinExistence type="inferred from homology"/>
<sequence>MNENLFTSFITPMMLGLPLVTLIILFPSLLFPSSNRLINNRLVSLQQWALQLMSKQMMSIHNTKGQTWTLMLMSLILFIGSTNLLGLLPHSFTPTTQLSMNLGMAIPLWAGAVITGFRNKTKASLAHFYPQGTPTPLIPMLVIIETISLFIQPMALAVRLTANITAGHLLIHLIGGATLALTSISPTTALITFIILILLTILEFELGTREAYVFTLLVSLYLHDNT</sequence>
<geneLocation type="mitochondrion"/>
<accession>Q32644</accession>
<name>ATP6_CAPHI</name>
<evidence type="ECO:0000250" key="1">
    <source>
        <dbReference type="UniProtKB" id="P00846"/>
    </source>
</evidence>
<evidence type="ECO:0000255" key="2"/>
<evidence type="ECO:0000305" key="3"/>
<gene>
    <name evidence="1" type="primary">MT-ATP6</name>
    <name type="synonym">ATP6</name>
    <name type="synonym">ATPASE6</name>
    <name type="synonym">MTATP6</name>
</gene>
<keyword id="KW-0066">ATP synthesis</keyword>
<keyword id="KW-0138">CF(0)</keyword>
<keyword id="KW-0375">Hydrogen ion transport</keyword>
<keyword id="KW-0406">Ion transport</keyword>
<keyword id="KW-0472">Membrane</keyword>
<keyword id="KW-0496">Mitochondrion</keyword>
<keyword id="KW-0999">Mitochondrion inner membrane</keyword>
<keyword id="KW-1185">Reference proteome</keyword>
<keyword id="KW-0812">Transmembrane</keyword>
<keyword id="KW-1133">Transmembrane helix</keyword>
<keyword id="KW-0813">Transport</keyword>
<feature type="chain" id="PRO_0000082103" description="ATP synthase F(0) complex subunit a">
    <location>
        <begin position="1"/>
        <end position="226"/>
    </location>
</feature>
<feature type="transmembrane region" description="Helical" evidence="2">
    <location>
        <begin position="9"/>
        <end position="29"/>
    </location>
</feature>
<feature type="transmembrane region" description="Helical" evidence="2">
    <location>
        <begin position="68"/>
        <end position="88"/>
    </location>
</feature>
<feature type="transmembrane region" description="Helical" evidence="2">
    <location>
        <begin position="97"/>
        <end position="117"/>
    </location>
</feature>
<feature type="transmembrane region" description="Helical" evidence="2">
    <location>
        <begin position="138"/>
        <end position="158"/>
    </location>
</feature>
<feature type="transmembrane region" description="Helical" evidence="2">
    <location>
        <begin position="184"/>
        <end position="204"/>
    </location>
</feature>
<protein>
    <recommendedName>
        <fullName evidence="1">ATP synthase F(0) complex subunit a</fullName>
    </recommendedName>
    <alternativeName>
        <fullName>F-ATPase protein 6</fullName>
    </alternativeName>
    <alternativeName>
        <fullName evidence="1">Proton-conducting channel, ATP synthase F(0) complex subunit a</fullName>
    </alternativeName>
</protein>
<organism>
    <name type="scientific">Capra hircus</name>
    <name type="common">Goat</name>
    <dbReference type="NCBI Taxonomy" id="9925"/>
    <lineage>
        <taxon>Eukaryota</taxon>
        <taxon>Metazoa</taxon>
        <taxon>Chordata</taxon>
        <taxon>Craniata</taxon>
        <taxon>Vertebrata</taxon>
        <taxon>Euteleostomi</taxon>
        <taxon>Mammalia</taxon>
        <taxon>Eutheria</taxon>
        <taxon>Laurasiatheria</taxon>
        <taxon>Artiodactyla</taxon>
        <taxon>Ruminantia</taxon>
        <taxon>Pecora</taxon>
        <taxon>Bovidae</taxon>
        <taxon>Caprinae</taxon>
        <taxon>Capra</taxon>
    </lineage>
</organism>
<dbReference type="EMBL" id="X65975">
    <property type="protein sequence ID" value="CAA46789.1"/>
    <property type="molecule type" value="Genomic_DNA"/>
</dbReference>
<dbReference type="SMR" id="Q32644"/>
<dbReference type="STRING" id="9925.ENSCHIP00000000006"/>
<dbReference type="Proteomes" id="UP000291000">
    <property type="component" value="Unassembled WGS sequence"/>
</dbReference>
<dbReference type="Proteomes" id="UP000694566">
    <property type="component" value="Unplaced"/>
</dbReference>
<dbReference type="GO" id="GO:0005743">
    <property type="term" value="C:mitochondrial inner membrane"/>
    <property type="evidence" value="ECO:0007669"/>
    <property type="project" value="UniProtKB-SubCell"/>
</dbReference>
<dbReference type="GO" id="GO:0045259">
    <property type="term" value="C:proton-transporting ATP synthase complex"/>
    <property type="evidence" value="ECO:0000250"/>
    <property type="project" value="UniProtKB"/>
</dbReference>
<dbReference type="GO" id="GO:0015252">
    <property type="term" value="F:proton channel activity"/>
    <property type="evidence" value="ECO:0000250"/>
    <property type="project" value="UniProtKB"/>
</dbReference>
<dbReference type="GO" id="GO:0046933">
    <property type="term" value="F:proton-transporting ATP synthase activity, rotational mechanism"/>
    <property type="evidence" value="ECO:0007669"/>
    <property type="project" value="TreeGrafter"/>
</dbReference>
<dbReference type="GO" id="GO:0015986">
    <property type="term" value="P:proton motive force-driven ATP synthesis"/>
    <property type="evidence" value="ECO:0000250"/>
    <property type="project" value="UniProtKB"/>
</dbReference>
<dbReference type="GO" id="GO:1902600">
    <property type="term" value="P:proton transmembrane transport"/>
    <property type="evidence" value="ECO:0000250"/>
    <property type="project" value="UniProtKB"/>
</dbReference>
<dbReference type="CDD" id="cd00310">
    <property type="entry name" value="ATP-synt_Fo_a_6"/>
    <property type="match status" value="1"/>
</dbReference>
<dbReference type="FunFam" id="1.20.120.220:FF:000004">
    <property type="entry name" value="ATP synthase subunit a"/>
    <property type="match status" value="1"/>
</dbReference>
<dbReference type="Gene3D" id="1.20.120.220">
    <property type="entry name" value="ATP synthase, F0 complex, subunit A"/>
    <property type="match status" value="1"/>
</dbReference>
<dbReference type="InterPro" id="IPR000568">
    <property type="entry name" value="ATP_synth_F0_asu"/>
</dbReference>
<dbReference type="InterPro" id="IPR023011">
    <property type="entry name" value="ATP_synth_F0_asu_AS"/>
</dbReference>
<dbReference type="InterPro" id="IPR045083">
    <property type="entry name" value="ATP_synth_F0_asu_bact/mt"/>
</dbReference>
<dbReference type="InterPro" id="IPR035908">
    <property type="entry name" value="F0_ATP_A_sf"/>
</dbReference>
<dbReference type="NCBIfam" id="TIGR01131">
    <property type="entry name" value="ATP_synt_6_or_A"/>
    <property type="match status" value="1"/>
</dbReference>
<dbReference type="PANTHER" id="PTHR11410">
    <property type="entry name" value="ATP SYNTHASE SUBUNIT A"/>
    <property type="match status" value="1"/>
</dbReference>
<dbReference type="PANTHER" id="PTHR11410:SF0">
    <property type="entry name" value="ATP SYNTHASE SUBUNIT A"/>
    <property type="match status" value="1"/>
</dbReference>
<dbReference type="Pfam" id="PF00119">
    <property type="entry name" value="ATP-synt_A"/>
    <property type="match status" value="1"/>
</dbReference>
<dbReference type="PRINTS" id="PR00123">
    <property type="entry name" value="ATPASEA"/>
</dbReference>
<dbReference type="SUPFAM" id="SSF81336">
    <property type="entry name" value="F1F0 ATP synthase subunit A"/>
    <property type="match status" value="1"/>
</dbReference>
<dbReference type="PROSITE" id="PS00449">
    <property type="entry name" value="ATPASE_A"/>
    <property type="match status" value="1"/>
</dbReference>
<reference key="1">
    <citation type="journal article" date="1995" name="J. Anim. Sci.">
        <title>Rapid communication: nucleotide sequence of caprine mitochondrial genes for tRNA(Lys) and two subunits of F0-ATPase.</title>
        <authorList>
            <person name="Dovc P."/>
            <person name="Hecht W."/>
        </authorList>
    </citation>
    <scope>NUCLEOTIDE SEQUENCE [GENOMIC DNA]</scope>
    <source>
        <strain>G1</strain>
        <tissue>Liver</tissue>
    </source>
</reference>
<comment type="function">
    <text evidence="1">Subunit a, of the mitochondrial membrane ATP synthase complex (F(1)F(0) ATP synthase or Complex V) that produces ATP from ADP in the presence of a proton gradient across the membrane which is generated by electron transport complexes of the respiratory chain. ATP synthase complex consist of a soluble F(1) head domain - the catalytic core - and a membrane F(1) domain - the membrane proton channel. These two domains are linked by a central stalk rotating inside the F(1) region and a stationary peripheral stalk. During catalysis, ATP synthesis in the catalytic domain of F(1) is coupled via a rotary mechanism of the central stalk subunits to proton translocation. With the subunit c (ATP5MC1), forms the proton-conducting channel in the F(0) domain, that contains two crucial half-channels (inlet and outlet) that facilitate proton movement from the mitochondrial intermembrane space (IMS) into the matrix. Protons are taken up via the inlet half-channel and released through the outlet half-channel, following a Grotthuss mechanism.</text>
</comment>
<comment type="catalytic activity">
    <reaction evidence="1">
        <text>H(+)(in) = H(+)(out)</text>
        <dbReference type="Rhea" id="RHEA:34979"/>
        <dbReference type="ChEBI" id="CHEBI:15378"/>
    </reaction>
</comment>
<comment type="subunit">
    <text evidence="1">Component of the ATP synthase complex composed at least of ATP5F1A/subunit alpha, ATP5F1B/subunit beta, ATP5MC1/subunit c (homooctomer), MT-ATP6/subunit a, MT-ATP8/subunit 8, ATP5ME/subunit e, ATP5MF/subunit f, ATP5MG/subunit g, ATP5MK/subunit k, ATP5MJ/subunit j, ATP5F1C/subunit gamma, ATP5F1D/subunit delta, ATP5F1E/subunit epsilon, ATP5PF/subunit F6, ATP5PB/subunit b, ATP5PD/subunit d, ATP5PO/subunit OSCP. ATP synthase complex consists of a soluble F(1) head domain (subunits alpha(3) and beta(3)) - the catalytic core - and a membrane F(0) domain - the membrane proton channel (subunits c, a, 8, e, f, g, k and j). These two domains are linked by a central stalk (subunits gamma, delta, and epsilon) rotating inside the F1 region and a stationary peripheral stalk (subunits F6, b, d, and OSCP). Interacts with DNAJC30; interaction is direct.</text>
</comment>
<comment type="subcellular location">
    <subcellularLocation>
        <location>Mitochondrion inner membrane</location>
        <topology>Multi-pass membrane protein</topology>
    </subcellularLocation>
</comment>
<comment type="similarity">
    <text evidence="3">Belongs to the ATPase A chain family.</text>
</comment>